<dbReference type="EC" id="3.1.26.4" evidence="1"/>
<dbReference type="EMBL" id="CP001033">
    <property type="protein sequence ID" value="ACB89654.1"/>
    <property type="molecule type" value="Genomic_DNA"/>
</dbReference>
<dbReference type="RefSeq" id="WP_000146860.1">
    <property type="nucleotide sequence ID" value="NC_010582.1"/>
</dbReference>
<dbReference type="SMR" id="B2ILU9"/>
<dbReference type="KEGG" id="spw:SPCG_0402"/>
<dbReference type="HOGENOM" id="CLU_059546_1_0_9"/>
<dbReference type="GO" id="GO:0005737">
    <property type="term" value="C:cytoplasm"/>
    <property type="evidence" value="ECO:0007669"/>
    <property type="project" value="UniProtKB-SubCell"/>
</dbReference>
<dbReference type="GO" id="GO:0032299">
    <property type="term" value="C:ribonuclease H2 complex"/>
    <property type="evidence" value="ECO:0007669"/>
    <property type="project" value="TreeGrafter"/>
</dbReference>
<dbReference type="GO" id="GO:0000287">
    <property type="term" value="F:magnesium ion binding"/>
    <property type="evidence" value="ECO:0007669"/>
    <property type="project" value="UniProtKB-UniRule"/>
</dbReference>
<dbReference type="GO" id="GO:0003723">
    <property type="term" value="F:RNA binding"/>
    <property type="evidence" value="ECO:0007669"/>
    <property type="project" value="InterPro"/>
</dbReference>
<dbReference type="GO" id="GO:0004523">
    <property type="term" value="F:RNA-DNA hybrid ribonuclease activity"/>
    <property type="evidence" value="ECO:0007669"/>
    <property type="project" value="UniProtKB-UniRule"/>
</dbReference>
<dbReference type="GO" id="GO:0043137">
    <property type="term" value="P:DNA replication, removal of RNA primer"/>
    <property type="evidence" value="ECO:0007669"/>
    <property type="project" value="TreeGrafter"/>
</dbReference>
<dbReference type="GO" id="GO:0006298">
    <property type="term" value="P:mismatch repair"/>
    <property type="evidence" value="ECO:0007669"/>
    <property type="project" value="TreeGrafter"/>
</dbReference>
<dbReference type="CDD" id="cd06590">
    <property type="entry name" value="RNase_HII_bacteria_HIII_like"/>
    <property type="match status" value="1"/>
</dbReference>
<dbReference type="CDD" id="cd14796">
    <property type="entry name" value="RNAse_HIII_N"/>
    <property type="match status" value="1"/>
</dbReference>
<dbReference type="FunFam" id="3.30.420.10:FF:000047">
    <property type="entry name" value="Ribonuclease HIII"/>
    <property type="match status" value="1"/>
</dbReference>
<dbReference type="Gene3D" id="3.30.420.10">
    <property type="entry name" value="Ribonuclease H-like superfamily/Ribonuclease H"/>
    <property type="match status" value="1"/>
</dbReference>
<dbReference type="Gene3D" id="3.30.310.10">
    <property type="entry name" value="TATA-Binding Protein"/>
    <property type="match status" value="1"/>
</dbReference>
<dbReference type="HAMAP" id="MF_00053">
    <property type="entry name" value="RNase_HIII"/>
    <property type="match status" value="1"/>
</dbReference>
<dbReference type="InterPro" id="IPR001352">
    <property type="entry name" value="RNase_HII/HIII"/>
</dbReference>
<dbReference type="InterPro" id="IPR024567">
    <property type="entry name" value="RNase_HII/HIII_dom"/>
</dbReference>
<dbReference type="InterPro" id="IPR004641">
    <property type="entry name" value="RNase_HIII"/>
</dbReference>
<dbReference type="InterPro" id="IPR024568">
    <property type="entry name" value="RNase_HIII_N"/>
</dbReference>
<dbReference type="InterPro" id="IPR012337">
    <property type="entry name" value="RNaseH-like_sf"/>
</dbReference>
<dbReference type="InterPro" id="IPR036397">
    <property type="entry name" value="RNaseH_sf"/>
</dbReference>
<dbReference type="InterPro" id="IPR012295">
    <property type="entry name" value="TBP_dom_sf"/>
</dbReference>
<dbReference type="NCBIfam" id="TIGR00716">
    <property type="entry name" value="rnhC"/>
    <property type="match status" value="1"/>
</dbReference>
<dbReference type="PANTHER" id="PTHR10954:SF23">
    <property type="entry name" value="RIBONUCLEASE"/>
    <property type="match status" value="1"/>
</dbReference>
<dbReference type="PANTHER" id="PTHR10954">
    <property type="entry name" value="RIBONUCLEASE H2 SUBUNIT A"/>
    <property type="match status" value="1"/>
</dbReference>
<dbReference type="Pfam" id="PF11858">
    <property type="entry name" value="DUF3378"/>
    <property type="match status" value="1"/>
</dbReference>
<dbReference type="Pfam" id="PF01351">
    <property type="entry name" value="RNase_HII"/>
    <property type="match status" value="1"/>
</dbReference>
<dbReference type="PIRSF" id="PIRSF037748">
    <property type="entry name" value="RnhC"/>
    <property type="match status" value="1"/>
</dbReference>
<dbReference type="SUPFAM" id="SSF53098">
    <property type="entry name" value="Ribonuclease H-like"/>
    <property type="match status" value="1"/>
</dbReference>
<dbReference type="PROSITE" id="PS51975">
    <property type="entry name" value="RNASE_H_2"/>
    <property type="match status" value="1"/>
</dbReference>
<organism>
    <name type="scientific">Streptococcus pneumoniae (strain CGSP14)</name>
    <dbReference type="NCBI Taxonomy" id="516950"/>
    <lineage>
        <taxon>Bacteria</taxon>
        <taxon>Bacillati</taxon>
        <taxon>Bacillota</taxon>
        <taxon>Bacilli</taxon>
        <taxon>Lactobacillales</taxon>
        <taxon>Streptococcaceae</taxon>
        <taxon>Streptococcus</taxon>
    </lineage>
</organism>
<comment type="function">
    <text evidence="1">Endonuclease that specifically degrades the RNA of RNA-DNA hybrids.</text>
</comment>
<comment type="catalytic activity">
    <reaction evidence="1">
        <text>Endonucleolytic cleavage to 5'-phosphomonoester.</text>
        <dbReference type="EC" id="3.1.26.4"/>
    </reaction>
</comment>
<comment type="cofactor">
    <cofactor evidence="1">
        <name>Mn(2+)</name>
        <dbReference type="ChEBI" id="CHEBI:29035"/>
    </cofactor>
    <cofactor evidence="1">
        <name>Mg(2+)</name>
        <dbReference type="ChEBI" id="CHEBI:18420"/>
    </cofactor>
    <text evidence="1">Manganese or magnesium. Binds 1 divalent metal ion per monomer in the absence of substrate. May bind a second metal ion after substrate binding.</text>
</comment>
<comment type="subcellular location">
    <subcellularLocation>
        <location evidence="1">Cytoplasm</location>
    </subcellularLocation>
</comment>
<comment type="similarity">
    <text evidence="1">Belongs to the RNase HII family. RnhC subfamily.</text>
</comment>
<sequence>MASITLTPSEKDIQAFLEHYQTSLAPSKNPYIRYFLKLPQATVSIYTSGKILLQGEGAEKYASFFGYQAVEQTSGQNLPLIGTDEVGNGSYFGGLAVVAAFVTPDQHDFLRKLGVGDSKTLTDQKIRQIAPILKEKIQHQALLLSPSKYNEVIGDRYNAVSVKVALHNQAIYLLLQKGVQPEKIVIDAFTSAKNYDKYLAQETNRFSNPISLEEKAEGKYLAVAVSSVIARDLFLENLENLERELGYQLPSGAGTASDKVASQILQAYGMQGLNFCAKLHFKNTEKAKNA</sequence>
<evidence type="ECO:0000255" key="1">
    <source>
        <dbReference type="HAMAP-Rule" id="MF_00053"/>
    </source>
</evidence>
<evidence type="ECO:0000255" key="2">
    <source>
        <dbReference type="PROSITE-ProRule" id="PRU01319"/>
    </source>
</evidence>
<name>RNH3_STRPS</name>
<protein>
    <recommendedName>
        <fullName evidence="1">Ribonuclease HIII</fullName>
        <shortName evidence="1">RNase HIII</shortName>
        <ecNumber evidence="1">3.1.26.4</ecNumber>
    </recommendedName>
</protein>
<proteinExistence type="inferred from homology"/>
<feature type="chain" id="PRO_1000091682" description="Ribonuclease HIII">
    <location>
        <begin position="1"/>
        <end position="290"/>
    </location>
</feature>
<feature type="domain" description="RNase H type-2" evidence="2">
    <location>
        <begin position="78"/>
        <end position="290"/>
    </location>
</feature>
<feature type="binding site" evidence="1">
    <location>
        <position position="84"/>
    </location>
    <ligand>
        <name>a divalent metal cation</name>
        <dbReference type="ChEBI" id="CHEBI:60240"/>
    </ligand>
</feature>
<feature type="binding site" evidence="1">
    <location>
        <position position="85"/>
    </location>
    <ligand>
        <name>a divalent metal cation</name>
        <dbReference type="ChEBI" id="CHEBI:60240"/>
    </ligand>
</feature>
<feature type="binding site" evidence="1">
    <location>
        <position position="187"/>
    </location>
    <ligand>
        <name>a divalent metal cation</name>
        <dbReference type="ChEBI" id="CHEBI:60240"/>
    </ligand>
</feature>
<reference key="1">
    <citation type="journal article" date="2009" name="BMC Genomics">
        <title>Genome evolution driven by host adaptations results in a more virulent and antimicrobial-resistant Streptococcus pneumoniae serotype 14.</title>
        <authorList>
            <person name="Ding F."/>
            <person name="Tang P."/>
            <person name="Hsu M.-H."/>
            <person name="Cui P."/>
            <person name="Hu S."/>
            <person name="Yu J."/>
            <person name="Chiu C.-H."/>
        </authorList>
    </citation>
    <scope>NUCLEOTIDE SEQUENCE [LARGE SCALE GENOMIC DNA]</scope>
    <source>
        <strain>CGSP14</strain>
    </source>
</reference>
<gene>
    <name evidence="1" type="primary">rnhC</name>
    <name type="ordered locus">SPCG_0402</name>
</gene>
<keyword id="KW-0963">Cytoplasm</keyword>
<keyword id="KW-0255">Endonuclease</keyword>
<keyword id="KW-0378">Hydrolase</keyword>
<keyword id="KW-0460">Magnesium</keyword>
<keyword id="KW-0479">Metal-binding</keyword>
<keyword id="KW-0540">Nuclease</keyword>
<accession>B2ILU9</accession>